<evidence type="ECO:0000255" key="1">
    <source>
        <dbReference type="HAMAP-Rule" id="MF_01346"/>
    </source>
</evidence>
<proteinExistence type="inferred from homology"/>
<protein>
    <recommendedName>
        <fullName evidence="1">ATP synthase subunit alpha</fullName>
        <ecNumber evidence="1">7.1.2.2</ecNumber>
    </recommendedName>
    <alternativeName>
        <fullName evidence="1">ATP synthase F1 sector subunit alpha</fullName>
    </alternativeName>
    <alternativeName>
        <fullName evidence="1">F-ATPase subunit alpha</fullName>
    </alternativeName>
</protein>
<dbReference type="EC" id="7.1.2.2" evidence="1"/>
<dbReference type="EMBL" id="CP000514">
    <property type="protein sequence ID" value="ABM20945.1"/>
    <property type="molecule type" value="Genomic_DNA"/>
</dbReference>
<dbReference type="RefSeq" id="WP_011787278.1">
    <property type="nucleotide sequence ID" value="NC_008740.1"/>
</dbReference>
<dbReference type="SMR" id="A1U7H6"/>
<dbReference type="STRING" id="351348.Maqu_3877"/>
<dbReference type="GeneID" id="31823149"/>
<dbReference type="KEGG" id="maq:Maqu_3877"/>
<dbReference type="eggNOG" id="COG0056">
    <property type="taxonomic scope" value="Bacteria"/>
</dbReference>
<dbReference type="HOGENOM" id="CLU_010091_2_1_6"/>
<dbReference type="OrthoDB" id="9803053at2"/>
<dbReference type="Proteomes" id="UP000000998">
    <property type="component" value="Chromosome"/>
</dbReference>
<dbReference type="GO" id="GO:0005886">
    <property type="term" value="C:plasma membrane"/>
    <property type="evidence" value="ECO:0007669"/>
    <property type="project" value="UniProtKB-SubCell"/>
</dbReference>
<dbReference type="GO" id="GO:0045259">
    <property type="term" value="C:proton-transporting ATP synthase complex"/>
    <property type="evidence" value="ECO:0007669"/>
    <property type="project" value="UniProtKB-KW"/>
</dbReference>
<dbReference type="GO" id="GO:0043531">
    <property type="term" value="F:ADP binding"/>
    <property type="evidence" value="ECO:0007669"/>
    <property type="project" value="TreeGrafter"/>
</dbReference>
<dbReference type="GO" id="GO:0005524">
    <property type="term" value="F:ATP binding"/>
    <property type="evidence" value="ECO:0007669"/>
    <property type="project" value="UniProtKB-UniRule"/>
</dbReference>
<dbReference type="GO" id="GO:0046933">
    <property type="term" value="F:proton-transporting ATP synthase activity, rotational mechanism"/>
    <property type="evidence" value="ECO:0007669"/>
    <property type="project" value="UniProtKB-UniRule"/>
</dbReference>
<dbReference type="CDD" id="cd18113">
    <property type="entry name" value="ATP-synt_F1_alpha_C"/>
    <property type="match status" value="1"/>
</dbReference>
<dbReference type="CDD" id="cd18116">
    <property type="entry name" value="ATP-synt_F1_alpha_N"/>
    <property type="match status" value="1"/>
</dbReference>
<dbReference type="CDD" id="cd01132">
    <property type="entry name" value="F1-ATPase_alpha_CD"/>
    <property type="match status" value="1"/>
</dbReference>
<dbReference type="FunFam" id="1.20.150.20:FF:000001">
    <property type="entry name" value="ATP synthase subunit alpha"/>
    <property type="match status" value="1"/>
</dbReference>
<dbReference type="FunFam" id="2.40.30.20:FF:000001">
    <property type="entry name" value="ATP synthase subunit alpha"/>
    <property type="match status" value="1"/>
</dbReference>
<dbReference type="FunFam" id="3.40.50.300:FF:000002">
    <property type="entry name" value="ATP synthase subunit alpha"/>
    <property type="match status" value="1"/>
</dbReference>
<dbReference type="Gene3D" id="2.40.30.20">
    <property type="match status" value="1"/>
</dbReference>
<dbReference type="Gene3D" id="1.20.150.20">
    <property type="entry name" value="ATP synthase alpha/beta chain, C-terminal domain"/>
    <property type="match status" value="1"/>
</dbReference>
<dbReference type="Gene3D" id="3.40.50.300">
    <property type="entry name" value="P-loop containing nucleotide triphosphate hydrolases"/>
    <property type="match status" value="1"/>
</dbReference>
<dbReference type="HAMAP" id="MF_01346">
    <property type="entry name" value="ATP_synth_alpha_bact"/>
    <property type="match status" value="1"/>
</dbReference>
<dbReference type="InterPro" id="IPR023366">
    <property type="entry name" value="ATP_synth_asu-like_sf"/>
</dbReference>
<dbReference type="InterPro" id="IPR000793">
    <property type="entry name" value="ATP_synth_asu_C"/>
</dbReference>
<dbReference type="InterPro" id="IPR038376">
    <property type="entry name" value="ATP_synth_asu_C_sf"/>
</dbReference>
<dbReference type="InterPro" id="IPR033732">
    <property type="entry name" value="ATP_synth_F1_a_nt-bd_dom"/>
</dbReference>
<dbReference type="InterPro" id="IPR005294">
    <property type="entry name" value="ATP_synth_F1_asu"/>
</dbReference>
<dbReference type="InterPro" id="IPR004100">
    <property type="entry name" value="ATPase_F1/V1/A1_a/bsu_N"/>
</dbReference>
<dbReference type="InterPro" id="IPR036121">
    <property type="entry name" value="ATPase_F1/V1/A1_a/bsu_N_sf"/>
</dbReference>
<dbReference type="InterPro" id="IPR000194">
    <property type="entry name" value="ATPase_F1/V1/A1_a/bsu_nucl-bd"/>
</dbReference>
<dbReference type="InterPro" id="IPR027417">
    <property type="entry name" value="P-loop_NTPase"/>
</dbReference>
<dbReference type="NCBIfam" id="TIGR00962">
    <property type="entry name" value="atpA"/>
    <property type="match status" value="1"/>
</dbReference>
<dbReference type="NCBIfam" id="NF009884">
    <property type="entry name" value="PRK13343.1"/>
    <property type="match status" value="1"/>
</dbReference>
<dbReference type="PANTHER" id="PTHR48082">
    <property type="entry name" value="ATP SYNTHASE SUBUNIT ALPHA, MITOCHONDRIAL"/>
    <property type="match status" value="1"/>
</dbReference>
<dbReference type="PANTHER" id="PTHR48082:SF2">
    <property type="entry name" value="ATP SYNTHASE SUBUNIT ALPHA, MITOCHONDRIAL"/>
    <property type="match status" value="1"/>
</dbReference>
<dbReference type="Pfam" id="PF00006">
    <property type="entry name" value="ATP-synt_ab"/>
    <property type="match status" value="1"/>
</dbReference>
<dbReference type="Pfam" id="PF00306">
    <property type="entry name" value="ATP-synt_ab_C"/>
    <property type="match status" value="1"/>
</dbReference>
<dbReference type="Pfam" id="PF02874">
    <property type="entry name" value="ATP-synt_ab_N"/>
    <property type="match status" value="1"/>
</dbReference>
<dbReference type="PIRSF" id="PIRSF039088">
    <property type="entry name" value="F_ATPase_subunit_alpha"/>
    <property type="match status" value="1"/>
</dbReference>
<dbReference type="SUPFAM" id="SSF47917">
    <property type="entry name" value="C-terminal domain of alpha and beta subunits of F1 ATP synthase"/>
    <property type="match status" value="1"/>
</dbReference>
<dbReference type="SUPFAM" id="SSF50615">
    <property type="entry name" value="N-terminal domain of alpha and beta subunits of F1 ATP synthase"/>
    <property type="match status" value="1"/>
</dbReference>
<dbReference type="SUPFAM" id="SSF52540">
    <property type="entry name" value="P-loop containing nucleoside triphosphate hydrolases"/>
    <property type="match status" value="1"/>
</dbReference>
<keyword id="KW-0066">ATP synthesis</keyword>
<keyword id="KW-0067">ATP-binding</keyword>
<keyword id="KW-0997">Cell inner membrane</keyword>
<keyword id="KW-1003">Cell membrane</keyword>
<keyword id="KW-0139">CF(1)</keyword>
<keyword id="KW-0375">Hydrogen ion transport</keyword>
<keyword id="KW-0406">Ion transport</keyword>
<keyword id="KW-0472">Membrane</keyword>
<keyword id="KW-0547">Nucleotide-binding</keyword>
<keyword id="KW-1278">Translocase</keyword>
<keyword id="KW-0813">Transport</keyword>
<name>ATPA_MARN8</name>
<gene>
    <name evidence="1" type="primary">atpA</name>
    <name type="ordered locus">Maqu_3877</name>
</gene>
<feature type="chain" id="PRO_0000302665" description="ATP synthase subunit alpha">
    <location>
        <begin position="1"/>
        <end position="514"/>
    </location>
</feature>
<feature type="binding site" evidence="1">
    <location>
        <begin position="170"/>
        <end position="177"/>
    </location>
    <ligand>
        <name>ATP</name>
        <dbReference type="ChEBI" id="CHEBI:30616"/>
    </ligand>
</feature>
<feature type="site" description="Required for activity" evidence="1">
    <location>
        <position position="374"/>
    </location>
</feature>
<accession>A1U7H6</accession>
<sequence length="514" mass="55625">MQQLNPSEISDIIKKRIEKLDISSEAKNEGTILSVSDGIVLIHGLADVMYGEMIEFANGTYGMALNLERDSVGAVVLGDYEGLAEGQKVRCTGRILEVPVGNELLGRVVDSLGNPIDGKGELGNSLTSPVEKVAPGVIARQSVDEPVQTGLKAIDTMVPIGRGQRELIIGDRQIGKTAVAIDAIINQKHTGIKCIYVAVGQKQSSIAAVVRKLEEHGAMDHTIVVAAGAADPAAMQFLAPYAGTSMGEFFRDRGEDALIVYDDLSKQAVAYRQISLLLRRPPGREAFPGDVFYLHSRLLERASRVNADYVEQFTNGEVKGKTGSLTALPIIETQAGDVSAFVPTNVISITDGQIFLETNLFNSGIRPAMNAGISVSRVGGAAQTKIMKKLGGNIRLALAQYRELAAFAQFASDLDEATRKQLEHGQRVTELMKQNQYSPMTVAEMGTVLFAANEGFLDDVDVNKVVKFEAQLLDWMRSEQKELLDKIGPEGNFNDDITAGLKAALEKFKTTQSW</sequence>
<organism>
    <name type="scientific">Marinobacter nauticus (strain ATCC 700491 / DSM 11845 / VT8)</name>
    <name type="common">Marinobacter aquaeolei</name>
    <dbReference type="NCBI Taxonomy" id="351348"/>
    <lineage>
        <taxon>Bacteria</taxon>
        <taxon>Pseudomonadati</taxon>
        <taxon>Pseudomonadota</taxon>
        <taxon>Gammaproteobacteria</taxon>
        <taxon>Pseudomonadales</taxon>
        <taxon>Marinobacteraceae</taxon>
        <taxon>Marinobacter</taxon>
    </lineage>
</organism>
<comment type="function">
    <text evidence="1">Produces ATP from ADP in the presence of a proton gradient across the membrane. The alpha chain is a regulatory subunit.</text>
</comment>
<comment type="catalytic activity">
    <reaction evidence="1">
        <text>ATP + H2O + 4 H(+)(in) = ADP + phosphate + 5 H(+)(out)</text>
        <dbReference type="Rhea" id="RHEA:57720"/>
        <dbReference type="ChEBI" id="CHEBI:15377"/>
        <dbReference type="ChEBI" id="CHEBI:15378"/>
        <dbReference type="ChEBI" id="CHEBI:30616"/>
        <dbReference type="ChEBI" id="CHEBI:43474"/>
        <dbReference type="ChEBI" id="CHEBI:456216"/>
        <dbReference type="EC" id="7.1.2.2"/>
    </reaction>
</comment>
<comment type="subunit">
    <text evidence="1">F-type ATPases have 2 components, CF(1) - the catalytic core - and CF(0) - the membrane proton channel. CF(1) has five subunits: alpha(3), beta(3), gamma(1), delta(1), epsilon(1). CF(0) has three main subunits: a(1), b(2) and c(9-12). The alpha and beta chains form an alternating ring which encloses part of the gamma chain. CF(1) is attached to CF(0) by a central stalk formed by the gamma and epsilon chains, while a peripheral stalk is formed by the delta and b chains.</text>
</comment>
<comment type="subcellular location">
    <subcellularLocation>
        <location evidence="1">Cell inner membrane</location>
        <topology evidence="1">Peripheral membrane protein</topology>
    </subcellularLocation>
</comment>
<comment type="similarity">
    <text evidence="1">Belongs to the ATPase alpha/beta chains family.</text>
</comment>
<reference key="1">
    <citation type="journal article" date="2011" name="Appl. Environ. Microbiol.">
        <title>Genomic potential of Marinobacter aquaeolei, a biogeochemical 'opportunitroph'.</title>
        <authorList>
            <person name="Singer E."/>
            <person name="Webb E.A."/>
            <person name="Nelson W.C."/>
            <person name="Heidelberg J.F."/>
            <person name="Ivanova N."/>
            <person name="Pati A."/>
            <person name="Edwards K.J."/>
        </authorList>
    </citation>
    <scope>NUCLEOTIDE SEQUENCE [LARGE SCALE GENOMIC DNA]</scope>
    <source>
        <strain>ATCC 700491 / DSM 11845 / VT8</strain>
    </source>
</reference>